<comment type="function">
    <text evidence="2 3">Orphan nuclear receptor that binds DNA as a monomer to the 5'-TCAAGGCCA-3' sequence and controls expression of target genes: regulates key biological processes, such as cholesterol and bile acid synthesis pathways, as well as cartilage, liver and pancreas morphogenesis (By similarity). Ligand-binding causes conformational change which causes recruitment of coactivators, promoting target gene activation. The specific ligand is unknown, but specific phospholipids, such as phosphatidylethanolamine, phosphatidylserine, dilauroyl phosphatidylcholine and diundecanoyl phosphatidylcholine can act as ligand in vitro. Acts as a pioneer transcription factor, which unwraps target DNA from histones and elicits local opening of closed chromatin (By similarity). Involved in the formation of connective tissue in lower jaw (By similarity).</text>
</comment>
<comment type="subunit">
    <text evidence="1">Monomer; Binds DNA as a monomer.</text>
</comment>
<comment type="subcellular location">
    <subcellularLocation>
        <location evidence="2">Nucleus</location>
    </subcellularLocation>
    <subcellularLocation>
        <location evidence="2">Chromosome</location>
    </subcellularLocation>
</comment>
<comment type="tissue specificity">
    <text evidence="7">Detected in liver and adrenal gland.</text>
</comment>
<comment type="domain">
    <text evidence="2">The C-terminal extension (CTE) loop competes with a DNA minor groove anchor of the nucleosome and releases entry-exit site DNA, thereby promoting opening of closed chromatin.</text>
</comment>
<comment type="similarity">
    <text evidence="9">Belongs to the nuclear hormone receptor family. NR5 subfamily.</text>
</comment>
<name>NR5A2_CHICK</name>
<dbReference type="EMBL" id="AB002403">
    <property type="protein sequence ID" value="BAA22838.1"/>
    <property type="molecule type" value="mRNA"/>
</dbReference>
<dbReference type="RefSeq" id="NP_990409.1">
    <property type="nucleotide sequence ID" value="NM_205078.1"/>
</dbReference>
<dbReference type="SMR" id="O42101"/>
<dbReference type="FunCoup" id="O42101">
    <property type="interactions" value="232"/>
</dbReference>
<dbReference type="STRING" id="9031.ENSGALP00000056574"/>
<dbReference type="PaxDb" id="9031-ENSGALP00000003413"/>
<dbReference type="GeneID" id="395961"/>
<dbReference type="KEGG" id="gga:395961"/>
<dbReference type="CTD" id="2494"/>
<dbReference type="VEuPathDB" id="HostDB:geneid_395961"/>
<dbReference type="eggNOG" id="KOG4218">
    <property type="taxonomic scope" value="Eukaryota"/>
</dbReference>
<dbReference type="InParanoid" id="O42101"/>
<dbReference type="OrthoDB" id="5984981at2759"/>
<dbReference type="PhylomeDB" id="O42101"/>
<dbReference type="PRO" id="PR:O42101"/>
<dbReference type="Proteomes" id="UP000000539">
    <property type="component" value="Unassembled WGS sequence"/>
</dbReference>
<dbReference type="GO" id="GO:0005694">
    <property type="term" value="C:chromosome"/>
    <property type="evidence" value="ECO:0007669"/>
    <property type="project" value="UniProtKB-SubCell"/>
</dbReference>
<dbReference type="GO" id="GO:0090575">
    <property type="term" value="C:RNA polymerase II transcription regulator complex"/>
    <property type="evidence" value="ECO:0000318"/>
    <property type="project" value="GO_Central"/>
</dbReference>
<dbReference type="GO" id="GO:0004879">
    <property type="term" value="F:nuclear receptor activity"/>
    <property type="evidence" value="ECO:0000250"/>
    <property type="project" value="UniProtKB"/>
</dbReference>
<dbReference type="GO" id="GO:0000978">
    <property type="term" value="F:RNA polymerase II cis-regulatory region sequence-specific DNA binding"/>
    <property type="evidence" value="ECO:0000318"/>
    <property type="project" value="GO_Central"/>
</dbReference>
<dbReference type="GO" id="GO:0008270">
    <property type="term" value="F:zinc ion binding"/>
    <property type="evidence" value="ECO:0007669"/>
    <property type="project" value="UniProtKB-KW"/>
</dbReference>
<dbReference type="GO" id="GO:0009755">
    <property type="term" value="P:hormone-mediated signaling pathway"/>
    <property type="evidence" value="ECO:0000318"/>
    <property type="project" value="GO_Central"/>
</dbReference>
<dbReference type="GO" id="GO:0045893">
    <property type="term" value="P:positive regulation of DNA-templated transcription"/>
    <property type="evidence" value="ECO:0000250"/>
    <property type="project" value="UniProtKB"/>
</dbReference>
<dbReference type="GO" id="GO:0006357">
    <property type="term" value="P:regulation of transcription by RNA polymerase II"/>
    <property type="evidence" value="ECO:0000318"/>
    <property type="project" value="GO_Central"/>
</dbReference>
<dbReference type="GO" id="GO:0035019">
    <property type="term" value="P:somatic stem cell population maintenance"/>
    <property type="evidence" value="ECO:0000250"/>
    <property type="project" value="UniProtKB"/>
</dbReference>
<dbReference type="GO" id="GO:0009888">
    <property type="term" value="P:tissue development"/>
    <property type="evidence" value="ECO:0000318"/>
    <property type="project" value="GO_Central"/>
</dbReference>
<dbReference type="CDD" id="cd07167">
    <property type="entry name" value="NR_DBD_Lrh-1_like"/>
    <property type="match status" value="1"/>
</dbReference>
<dbReference type="CDD" id="cd07069">
    <property type="entry name" value="NR_LBD_Lrh-1"/>
    <property type="match status" value="1"/>
</dbReference>
<dbReference type="FunFam" id="3.30.50.10:FF:000006">
    <property type="entry name" value="Nuclear receptor subfamily 5 group A member"/>
    <property type="match status" value="1"/>
</dbReference>
<dbReference type="FunFam" id="1.10.565.10:FF:000011">
    <property type="entry name" value="Nuclear receptor subfamily 5, group A, member 2"/>
    <property type="match status" value="1"/>
</dbReference>
<dbReference type="Gene3D" id="3.30.50.10">
    <property type="entry name" value="Erythroid Transcription Factor GATA-1, subunit A"/>
    <property type="match status" value="1"/>
</dbReference>
<dbReference type="Gene3D" id="1.10.565.10">
    <property type="entry name" value="Retinoid X Receptor"/>
    <property type="match status" value="1"/>
</dbReference>
<dbReference type="InterPro" id="IPR035500">
    <property type="entry name" value="NHR-like_dom_sf"/>
</dbReference>
<dbReference type="InterPro" id="IPR016355">
    <property type="entry name" value="NR5-like"/>
</dbReference>
<dbReference type="InterPro" id="IPR000536">
    <property type="entry name" value="Nucl_hrmn_rcpt_lig-bd"/>
</dbReference>
<dbReference type="InterPro" id="IPR001723">
    <property type="entry name" value="Nuclear_hrmn_rcpt"/>
</dbReference>
<dbReference type="InterPro" id="IPR001628">
    <property type="entry name" value="Znf_hrmn_rcpt"/>
</dbReference>
<dbReference type="InterPro" id="IPR013088">
    <property type="entry name" value="Znf_NHR/GATA"/>
</dbReference>
<dbReference type="PANTHER" id="PTHR24086">
    <property type="entry name" value="NUCLEAR RECEPTOR SUBFAMILY 5 GROUP A"/>
    <property type="match status" value="1"/>
</dbReference>
<dbReference type="PANTHER" id="PTHR24086:SF18">
    <property type="entry name" value="NUCLEAR RECEPTOR SUBFAMILY 5 GROUP A MEMBER 2"/>
    <property type="match status" value="1"/>
</dbReference>
<dbReference type="Pfam" id="PF00104">
    <property type="entry name" value="Hormone_recep"/>
    <property type="match status" value="1"/>
</dbReference>
<dbReference type="Pfam" id="PF00105">
    <property type="entry name" value="zf-C4"/>
    <property type="match status" value="1"/>
</dbReference>
<dbReference type="PIRSF" id="PIRSF002530">
    <property type="entry name" value="Nuc_orph_FTZ-F1"/>
    <property type="match status" value="1"/>
</dbReference>
<dbReference type="PRINTS" id="PR00398">
    <property type="entry name" value="STRDHORMONER"/>
</dbReference>
<dbReference type="PRINTS" id="PR00047">
    <property type="entry name" value="STROIDFINGER"/>
</dbReference>
<dbReference type="SMART" id="SM00430">
    <property type="entry name" value="HOLI"/>
    <property type="match status" value="1"/>
</dbReference>
<dbReference type="SMART" id="SM00399">
    <property type="entry name" value="ZnF_C4"/>
    <property type="match status" value="1"/>
</dbReference>
<dbReference type="SUPFAM" id="SSF57716">
    <property type="entry name" value="Glucocorticoid receptor-like (DNA-binding domain)"/>
    <property type="match status" value="1"/>
</dbReference>
<dbReference type="SUPFAM" id="SSF48508">
    <property type="entry name" value="Nuclear receptor ligand-binding domain"/>
    <property type="match status" value="1"/>
</dbReference>
<dbReference type="PROSITE" id="PS51843">
    <property type="entry name" value="NR_LBD"/>
    <property type="match status" value="1"/>
</dbReference>
<dbReference type="PROSITE" id="PS00031">
    <property type="entry name" value="NUCLEAR_REC_DBD_1"/>
    <property type="match status" value="1"/>
</dbReference>
<dbReference type="PROSITE" id="PS51030">
    <property type="entry name" value="NUCLEAR_REC_DBD_2"/>
    <property type="match status" value="1"/>
</dbReference>
<feature type="chain" id="PRO_0000053737" description="Nuclear receptor subfamily 5 group A member 2">
    <location>
        <begin position="1"/>
        <end position="501"/>
    </location>
</feature>
<feature type="domain" description="NR LBD" evidence="5">
    <location>
        <begin position="260"/>
        <end position="499"/>
    </location>
</feature>
<feature type="DNA-binding region" description="Nuclear receptor" evidence="4">
    <location>
        <begin position="43"/>
        <end position="114"/>
    </location>
</feature>
<feature type="zinc finger region" description="NR C4-type" evidence="4">
    <location>
        <begin position="46"/>
        <end position="66"/>
    </location>
</feature>
<feature type="zinc finger region" description="NR C4-type" evidence="4">
    <location>
        <begin position="82"/>
        <end position="106"/>
    </location>
</feature>
<feature type="region of interest" description="C-terminal extension (CTE)" evidence="1">
    <location>
        <begin position="112"/>
        <end position="127"/>
    </location>
</feature>
<feature type="region of interest" description="Disordered" evidence="6">
    <location>
        <begin position="186"/>
        <end position="207"/>
    </location>
</feature>
<feature type="region of interest" description="AF-2" evidence="5">
    <location>
        <begin position="488"/>
        <end position="499"/>
    </location>
</feature>
<feature type="short sequence motif" description="FTZ-F1 box" evidence="1">
    <location>
        <begin position="128"/>
        <end position="147"/>
    </location>
</feature>
<feature type="binding site" evidence="1">
    <location>
        <position position="46"/>
    </location>
    <ligand>
        <name>Zn(2+)</name>
        <dbReference type="ChEBI" id="CHEBI:29105"/>
        <label>1</label>
    </ligand>
</feature>
<feature type="binding site" evidence="1">
    <location>
        <position position="49"/>
    </location>
    <ligand>
        <name>Zn(2+)</name>
        <dbReference type="ChEBI" id="CHEBI:29105"/>
        <label>1</label>
    </ligand>
</feature>
<feature type="binding site" evidence="1">
    <location>
        <position position="63"/>
    </location>
    <ligand>
        <name>Zn(2+)</name>
        <dbReference type="ChEBI" id="CHEBI:29105"/>
        <label>1</label>
    </ligand>
</feature>
<feature type="binding site" evidence="1">
    <location>
        <position position="66"/>
    </location>
    <ligand>
        <name>Zn(2+)</name>
        <dbReference type="ChEBI" id="CHEBI:29105"/>
        <label>1</label>
    </ligand>
</feature>
<feature type="binding site" evidence="1">
    <location>
        <position position="82"/>
    </location>
    <ligand>
        <name>Zn(2+)</name>
        <dbReference type="ChEBI" id="CHEBI:29105"/>
        <label>2</label>
    </ligand>
</feature>
<feature type="binding site" evidence="1">
    <location>
        <position position="88"/>
    </location>
    <ligand>
        <name>Zn(2+)</name>
        <dbReference type="ChEBI" id="CHEBI:29105"/>
        <label>2</label>
    </ligand>
</feature>
<feature type="binding site" evidence="1">
    <location>
        <position position="98"/>
    </location>
    <ligand>
        <name>Zn(2+)</name>
        <dbReference type="ChEBI" id="CHEBI:29105"/>
        <label>2</label>
    </ligand>
</feature>
<feature type="binding site" evidence="1">
    <location>
        <position position="101"/>
    </location>
    <ligand>
        <name>Zn(2+)</name>
        <dbReference type="ChEBI" id="CHEBI:29105"/>
        <label>2</label>
    </ligand>
</feature>
<feature type="binding site" evidence="1">
    <location>
        <begin position="381"/>
        <end position="384"/>
    </location>
    <ligand>
        <name>a phospholipid derivative</name>
        <dbReference type="ChEBI" id="CHEBI:16247"/>
    </ligand>
</feature>
<feature type="binding site" evidence="1">
    <location>
        <position position="476"/>
    </location>
    <ligand>
        <name>a phospholipid derivative</name>
        <dbReference type="ChEBI" id="CHEBI:16247"/>
    </ligand>
</feature>
<feature type="binding site" evidence="1">
    <location>
        <position position="480"/>
    </location>
    <ligand>
        <name>a phospholipid derivative</name>
        <dbReference type="ChEBI" id="CHEBI:16247"/>
    </ligand>
</feature>
<evidence type="ECO:0000250" key="1">
    <source>
        <dbReference type="UniProtKB" id="O00482"/>
    </source>
</evidence>
<evidence type="ECO:0000250" key="2">
    <source>
        <dbReference type="UniProtKB" id="P45448"/>
    </source>
</evidence>
<evidence type="ECO:0000250" key="3">
    <source>
        <dbReference type="UniProtKB" id="Q90YL6"/>
    </source>
</evidence>
<evidence type="ECO:0000255" key="4">
    <source>
        <dbReference type="PROSITE-ProRule" id="PRU00407"/>
    </source>
</evidence>
<evidence type="ECO:0000255" key="5">
    <source>
        <dbReference type="PROSITE-ProRule" id="PRU01189"/>
    </source>
</evidence>
<evidence type="ECO:0000256" key="6">
    <source>
        <dbReference type="SAM" id="MobiDB-lite"/>
    </source>
</evidence>
<evidence type="ECO:0000269" key="7">
    <source>
    </source>
</evidence>
<evidence type="ECO:0000303" key="8">
    <source>
    </source>
</evidence>
<evidence type="ECO:0000305" key="9"/>
<keyword id="KW-0010">Activator</keyword>
<keyword id="KW-0158">Chromosome</keyword>
<keyword id="KW-0238">DNA-binding</keyword>
<keyword id="KW-0479">Metal-binding</keyword>
<keyword id="KW-0539">Nucleus</keyword>
<keyword id="KW-0675">Receptor</keyword>
<keyword id="KW-1185">Reference proteome</keyword>
<keyword id="KW-0804">Transcription</keyword>
<keyword id="KW-0805">Transcription regulation</keyword>
<keyword id="KW-0862">Zinc</keyword>
<keyword id="KW-0863">Zinc-finger</keyword>
<sequence length="501" mass="57103">MLPKVETEALGLARSNGEQGQMPENMQVSQFKMVNYSYDEDLEELCPVCGDKVSGYHYGLLTCESCKGFFKRTVQNNKRYTCIENQNCQIDKTQRKRCPYCRFQKCLSVGMKLEAVRADRMRGGRNKFGPMYKRDRALKQQKKALIRANGLKLEAMTQVIQAMPTDLTISSAIQNIHSASKGLPLNHTALPPTDYDRSPFVTSPISMTMPPHGSLQGYQTYGHFPSRAIKSEYPDPYTSSPESIMGYSYMDGYQTSSPASIPHLILELQKCEPDEPQVQAKIMAYLQQEQANRSKHEKLNTFGLMCKMADQTLFSIVEWARSSIFFRELKVDDQMKLLQNCWSELLILDHIYRQVVHVKEGSILLVTGQQVDYSVIASQAGATLNNLMSHAQELVAKLRSLQFDLREFVCLKFLVLFSLDVKNLENFQLVEGVQEQVNAALLDYTMCNYPQQTDKFGQLLLRLPEIRAISMQAEEYLYCKHLNGDVPCNNLLIEMLHAKRA</sequence>
<organism>
    <name type="scientific">Gallus gallus</name>
    <name type="common">Chicken</name>
    <dbReference type="NCBI Taxonomy" id="9031"/>
    <lineage>
        <taxon>Eukaryota</taxon>
        <taxon>Metazoa</taxon>
        <taxon>Chordata</taxon>
        <taxon>Craniata</taxon>
        <taxon>Vertebrata</taxon>
        <taxon>Euteleostomi</taxon>
        <taxon>Archelosauria</taxon>
        <taxon>Archosauria</taxon>
        <taxon>Dinosauria</taxon>
        <taxon>Saurischia</taxon>
        <taxon>Theropoda</taxon>
        <taxon>Coelurosauria</taxon>
        <taxon>Aves</taxon>
        <taxon>Neognathae</taxon>
        <taxon>Galloanserae</taxon>
        <taxon>Galliformes</taxon>
        <taxon>Phasianidae</taxon>
        <taxon>Phasianinae</taxon>
        <taxon>Gallus</taxon>
    </lineage>
</organism>
<reference key="1">
    <citation type="journal article" date="1997" name="Gene">
        <title>Molecular cloning of chicken FTZ-F1-related orphan receptors.</title>
        <authorList>
            <person name="Kudo T."/>
            <person name="Sutou S."/>
        </authorList>
    </citation>
    <scope>NUCLEOTIDE SEQUENCE [MRNA]</scope>
    <scope>TISSUE SPECIFICITY</scope>
</reference>
<proteinExistence type="evidence at transcript level"/>
<gene>
    <name evidence="1" type="primary">NR5A2</name>
</gene>
<accession>O42101</accession>
<protein>
    <recommendedName>
        <fullName evidence="9">Nuclear receptor subfamily 5 group A member 2</fullName>
    </recommendedName>
    <alternativeName>
        <fullName evidence="8">FTF/LRH-1</fullName>
    </alternativeName>
    <alternativeName>
        <fullName evidence="8">OR2.0</fullName>
    </alternativeName>
</protein>